<organism>
    <name type="scientific">Saccharomyces cerevisiae (strain FostersO)</name>
    <name type="common">Baker's yeast</name>
    <dbReference type="NCBI Taxonomy" id="764101"/>
    <lineage>
        <taxon>Eukaryota</taxon>
        <taxon>Fungi</taxon>
        <taxon>Dikarya</taxon>
        <taxon>Ascomycota</taxon>
        <taxon>Saccharomycotina</taxon>
        <taxon>Saccharomycetes</taxon>
        <taxon>Saccharomycetales</taxon>
        <taxon>Saccharomycetaceae</taxon>
        <taxon>Saccharomyces</taxon>
    </lineage>
</organism>
<keyword id="KW-0966">Cell projection</keyword>
<keyword id="KW-0963">Cytoplasm</keyword>
<feature type="chain" id="PRO_0000410741" description="Topoisomerase I damage affected protein 2">
    <location>
        <begin position="1"/>
        <end position="124"/>
    </location>
</feature>
<comment type="subcellular location">
    <subcellularLocation>
        <location evidence="1">Cytoplasm</location>
    </subcellularLocation>
    <subcellularLocation>
        <location evidence="1">Cell projection</location>
    </subcellularLocation>
    <text evidence="1">Concentrates at cytoplasmic punctate structures and localizes at the mating projection tip.</text>
</comment>
<comment type="similarity">
    <text evidence="2">Belongs to the TDA2 family.</text>
</comment>
<proteinExistence type="inferred from homology"/>
<name>TDA2_YEASO</name>
<sequence length="124" mass="14253">MQIEIKDGRSDNSPLPERKLVTLIQESYDSLKDDNEINLSTESTSNLLIKLVLEKLEKHSSLYKYIASVTTLNIEGLNEENANFSLKNDIGASWESKKDGIFNYKLEDKNSNECYLITILWLHK</sequence>
<accession>E7NGT6</accession>
<evidence type="ECO:0000250" key="1">
    <source>
        <dbReference type="UniProtKB" id="P40045"/>
    </source>
</evidence>
<evidence type="ECO:0000305" key="2"/>
<gene>
    <name type="primary">TDA2</name>
    <name type="ORF">FOSTERSO_1312</name>
</gene>
<reference key="1">
    <citation type="journal article" date="2011" name="PLoS Genet.">
        <title>Whole-genome comparison reveals novel genetic elements that characterize the genome of industrial strains of Saccharomyces cerevisiae.</title>
        <authorList>
            <person name="Borneman A.R."/>
            <person name="Desany B.A."/>
            <person name="Riches D."/>
            <person name="Affourtit J.P."/>
            <person name="Forgan A.H."/>
            <person name="Pretorius I.S."/>
            <person name="Egholm M."/>
            <person name="Chambers P.J."/>
        </authorList>
    </citation>
    <scope>NUCLEOTIDE SEQUENCE [LARGE SCALE GENOMIC DNA]</scope>
    <source>
        <strain>FostersO</strain>
    </source>
</reference>
<dbReference type="EMBL" id="AEEZ01000029">
    <property type="protein sequence ID" value="EGA62620.1"/>
    <property type="molecule type" value="Genomic_DNA"/>
</dbReference>
<dbReference type="SMR" id="E7NGT6"/>
<dbReference type="HOGENOM" id="CLU_137494_1_0_1"/>
<dbReference type="OMA" id="TIIWISK"/>
<dbReference type="OrthoDB" id="38744at4893"/>
<dbReference type="GO" id="GO:0042995">
    <property type="term" value="C:cell projection"/>
    <property type="evidence" value="ECO:0007669"/>
    <property type="project" value="UniProtKB-SubCell"/>
</dbReference>
<dbReference type="GO" id="GO:0005737">
    <property type="term" value="C:cytoplasm"/>
    <property type="evidence" value="ECO:0007669"/>
    <property type="project" value="UniProtKB-SubCell"/>
</dbReference>
<dbReference type="CDD" id="cd21457">
    <property type="entry name" value="DLC-like_TDA2"/>
    <property type="match status" value="1"/>
</dbReference>
<dbReference type="FunFam" id="3.30.1140.40:FF:000005">
    <property type="entry name" value="Topoisomerase I damage affected protein 2"/>
    <property type="match status" value="1"/>
</dbReference>
<dbReference type="Gene3D" id="3.30.1140.40">
    <property type="entry name" value="Tctex-1"/>
    <property type="match status" value="1"/>
</dbReference>
<dbReference type="InterPro" id="IPR038586">
    <property type="entry name" value="Tctex-1-like_sf"/>
</dbReference>
<protein>
    <recommendedName>
        <fullName>Topoisomerase I damage affected protein 2</fullName>
    </recommendedName>
</protein>